<name>SYME_SALPA</name>
<reference key="1">
    <citation type="journal article" date="2004" name="Nat. Genet.">
        <title>Comparison of genome degradation in Paratyphi A and Typhi, human-restricted serovars of Salmonella enterica that cause typhoid.</title>
        <authorList>
            <person name="McClelland M."/>
            <person name="Sanderson K.E."/>
            <person name="Clifton S.W."/>
            <person name="Latreille P."/>
            <person name="Porwollik S."/>
            <person name="Sabo A."/>
            <person name="Meyer R."/>
            <person name="Bieri T."/>
            <person name="Ozersky P."/>
            <person name="McLellan M."/>
            <person name="Harkins C.R."/>
            <person name="Wang C."/>
            <person name="Nguyen C."/>
            <person name="Berghoff A."/>
            <person name="Elliott G."/>
            <person name="Kohlberg S."/>
            <person name="Strong C."/>
            <person name="Du F."/>
            <person name="Carter J."/>
            <person name="Kremizki C."/>
            <person name="Layman D."/>
            <person name="Leonard S."/>
            <person name="Sun H."/>
            <person name="Fulton L."/>
            <person name="Nash W."/>
            <person name="Miner T."/>
            <person name="Minx P."/>
            <person name="Delehaunty K."/>
            <person name="Fronick C."/>
            <person name="Magrini V."/>
            <person name="Nhan M."/>
            <person name="Warren W."/>
            <person name="Florea L."/>
            <person name="Spieth J."/>
            <person name="Wilson R.K."/>
        </authorList>
    </citation>
    <scope>NUCLEOTIDE SEQUENCE [LARGE SCALE GENOMIC DNA]</scope>
    <source>
        <strain>ATCC 9150 / SARB42</strain>
    </source>
</reference>
<evidence type="ECO:0000255" key="1">
    <source>
        <dbReference type="HAMAP-Rule" id="MF_01193"/>
    </source>
</evidence>
<evidence type="ECO:0000255" key="2">
    <source>
        <dbReference type="PROSITE-ProRule" id="PRU01076"/>
    </source>
</evidence>
<evidence type="ECO:0000305" key="3"/>
<proteinExistence type="inferred from homology"/>
<accession>Q5PIF2</accession>
<protein>
    <recommendedName>
        <fullName evidence="1">Endoribonuclease SymE</fullName>
        <ecNumber evidence="1">3.1.-.-</ecNumber>
    </recommendedName>
</protein>
<dbReference type="EC" id="3.1.-.-" evidence="1"/>
<dbReference type="EMBL" id="CP000026">
    <property type="protein sequence ID" value="AAV80070.1"/>
    <property type="status" value="ALT_INIT"/>
    <property type="molecule type" value="Genomic_DNA"/>
</dbReference>
<dbReference type="RefSeq" id="WP_001520547.1">
    <property type="nucleotide sequence ID" value="NC_006511.1"/>
</dbReference>
<dbReference type="KEGG" id="spt:SPA4344"/>
<dbReference type="HOGENOM" id="CLU_151239_0_0_6"/>
<dbReference type="Proteomes" id="UP000008185">
    <property type="component" value="Chromosome"/>
</dbReference>
<dbReference type="GO" id="GO:0005737">
    <property type="term" value="C:cytoplasm"/>
    <property type="evidence" value="ECO:0007669"/>
    <property type="project" value="UniProtKB-SubCell"/>
</dbReference>
<dbReference type="GO" id="GO:0003677">
    <property type="term" value="F:DNA binding"/>
    <property type="evidence" value="ECO:0007669"/>
    <property type="project" value="UniProtKB-KW"/>
</dbReference>
<dbReference type="GO" id="GO:0003723">
    <property type="term" value="F:RNA binding"/>
    <property type="evidence" value="ECO:0007669"/>
    <property type="project" value="UniProtKB-KW"/>
</dbReference>
<dbReference type="GO" id="GO:0004521">
    <property type="term" value="F:RNA endonuclease activity"/>
    <property type="evidence" value="ECO:0007669"/>
    <property type="project" value="UniProtKB-UniRule"/>
</dbReference>
<dbReference type="GO" id="GO:0016070">
    <property type="term" value="P:RNA metabolic process"/>
    <property type="evidence" value="ECO:0007669"/>
    <property type="project" value="InterPro"/>
</dbReference>
<dbReference type="HAMAP" id="MF_01193">
    <property type="entry name" value="Endoribonucl_SymE"/>
    <property type="match status" value="1"/>
</dbReference>
<dbReference type="InterPro" id="IPR007159">
    <property type="entry name" value="SpoVT-AbrB_dom"/>
</dbReference>
<dbReference type="InterPro" id="IPR014944">
    <property type="entry name" value="Toxin_SymE-like"/>
</dbReference>
<dbReference type="InterPro" id="IPR020883">
    <property type="entry name" value="TypeI_TA_SymE"/>
</dbReference>
<dbReference type="NCBIfam" id="NF010128">
    <property type="entry name" value="PRK13605.1"/>
    <property type="match status" value="1"/>
</dbReference>
<dbReference type="Pfam" id="PF08845">
    <property type="entry name" value="SymE_toxin"/>
    <property type="match status" value="1"/>
</dbReference>
<dbReference type="PROSITE" id="PS51740">
    <property type="entry name" value="SPOVT_ABRB"/>
    <property type="match status" value="1"/>
</dbReference>
<sequence length="110" mass="12154">MTTVHSIADPCDPEVSPTNNRHLTVSYASRYPDYTRIPALTMKGQWLEAAGFATGTEVDVRVMNGCIVLTAQQPQPEESELMQSLRQVSKLSARKQKQVQAFIDVMAGSK</sequence>
<gene>
    <name evidence="1" type="primary">symE</name>
    <name type="ordered locus">SPA4344</name>
</gene>
<organism>
    <name type="scientific">Salmonella paratyphi A (strain ATCC 9150 / SARB42)</name>
    <dbReference type="NCBI Taxonomy" id="295319"/>
    <lineage>
        <taxon>Bacteria</taxon>
        <taxon>Pseudomonadati</taxon>
        <taxon>Pseudomonadota</taxon>
        <taxon>Gammaproteobacteria</taxon>
        <taxon>Enterobacterales</taxon>
        <taxon>Enterobacteriaceae</taxon>
        <taxon>Salmonella</taxon>
    </lineage>
</organism>
<keyword id="KW-0963">Cytoplasm</keyword>
<keyword id="KW-0238">DNA-binding</keyword>
<keyword id="KW-0255">Endonuclease</keyword>
<keyword id="KW-0378">Hydrolase</keyword>
<keyword id="KW-0540">Nuclease</keyword>
<keyword id="KW-0694">RNA-binding</keyword>
<comment type="function">
    <text evidence="1">Involved in the degradation and recycling of damaged RNA. It is itself a target for degradation by the ATP-dependent protease Lon.</text>
</comment>
<comment type="subcellular location">
    <subcellularLocation>
        <location evidence="1">Cytoplasm</location>
    </subcellularLocation>
</comment>
<comment type="similarity">
    <text evidence="1">Belongs to the SymE family.</text>
</comment>
<comment type="sequence caution" evidence="3">
    <conflict type="erroneous initiation">
        <sequence resource="EMBL-CDS" id="AAV80070"/>
    </conflict>
</comment>
<feature type="chain" id="PRO_0000297824" description="Endoribonuclease SymE">
    <location>
        <begin position="1"/>
        <end position="110"/>
    </location>
</feature>
<feature type="domain" description="SpoVT-AbrB" evidence="2">
    <location>
        <begin position="29"/>
        <end position="74"/>
    </location>
</feature>